<keyword id="KW-0002">3D-structure</keyword>
<keyword id="KW-0130">Cell adhesion</keyword>
<keyword id="KW-1003">Cell membrane</keyword>
<keyword id="KW-1015">Disulfide bond</keyword>
<keyword id="KW-0325">Glycoprotein</keyword>
<keyword id="KW-0393">Immunoglobulin domain</keyword>
<keyword id="KW-0472">Membrane</keyword>
<keyword id="KW-1267">Proteomics identification</keyword>
<keyword id="KW-1185">Reference proteome</keyword>
<keyword id="KW-0677">Repeat</keyword>
<keyword id="KW-0732">Signal</keyword>
<keyword id="KW-0812">Transmembrane</keyword>
<keyword id="KW-1133">Transmembrane helix</keyword>
<accession>P06729</accession>
<accession>Q96TE5</accession>
<evidence type="ECO:0000250" key="1">
    <source>
        <dbReference type="UniProtKB" id="P08920"/>
    </source>
</evidence>
<evidence type="ECO:0000250" key="2">
    <source>
        <dbReference type="UniProtKB" id="P08921"/>
    </source>
</evidence>
<evidence type="ECO:0000255" key="3"/>
<evidence type="ECO:0000256" key="4">
    <source>
        <dbReference type="SAM" id="MobiDB-lite"/>
    </source>
</evidence>
<evidence type="ECO:0000269" key="5">
    <source>
    </source>
</evidence>
<evidence type="ECO:0000269" key="6">
    <source>
    </source>
</evidence>
<evidence type="ECO:0000269" key="7">
    <source>
    </source>
</evidence>
<evidence type="ECO:0000269" key="8">
    <source>
    </source>
</evidence>
<evidence type="ECO:0000269" key="9">
    <source>
    </source>
</evidence>
<evidence type="ECO:0000269" key="10">
    <source>
    </source>
</evidence>
<evidence type="ECO:0000269" key="11">
    <source>
    </source>
</evidence>
<evidence type="ECO:0000269" key="12">
    <source>
    </source>
</evidence>
<evidence type="ECO:0000305" key="13"/>
<evidence type="ECO:0007744" key="14">
    <source>
        <dbReference type="PDB" id="1GYA"/>
    </source>
</evidence>
<evidence type="ECO:0007744" key="15">
    <source>
        <dbReference type="PDB" id="1HNF"/>
    </source>
</evidence>
<evidence type="ECO:0007744" key="16">
    <source>
        <dbReference type="PDB" id="1QA9"/>
    </source>
</evidence>
<evidence type="ECO:0007829" key="17">
    <source>
        <dbReference type="PDB" id="1HNF"/>
    </source>
</evidence>
<evidence type="ECO:0007829" key="18">
    <source>
        <dbReference type="PDB" id="1QA9"/>
    </source>
</evidence>
<comment type="function">
    <text>CD2 interacts with lymphocyte function-associated antigen CD58 (LFA-3) and CD48/BCM1 to mediate adhesion between T-cells and other cell types. CD2 is implicated in the triggering of T-cells, the cytoplasmic domain is implicated in the signaling function.</text>
</comment>
<comment type="subunit">
    <text evidence="1 2 7 12">Interacts with CD48 (By similarity). Interacts with CD58 (LFA-3) (PubMed:10380930). Interacts with CD2AP (By similarity). Interacts with PSTPIP1 (PubMed:9857189). Interacts with FCGR3A; this interaction modulates NK cell activation and cytotoxicity.</text>
</comment>
<comment type="interaction">
    <interactant intactId="EBI-3912464">
        <id>P06729</id>
    </interactant>
    <interactant intactId="EBI-298152">
        <id>Q9Y5K6</id>
        <label>CD2AP</label>
    </interactant>
    <organismsDiffer>false</organismsDiffer>
    <experiments>4</experiments>
</comment>
<comment type="interaction">
    <interactant intactId="EBI-3912464">
        <id>P06729</id>
    </interactant>
    <interactant intactId="EBI-768015">
        <id>O95400</id>
        <label>CD2BP2</label>
    </interactant>
    <organismsDiffer>false</organismsDiffer>
    <experiments>9</experiments>
</comment>
<comment type="interaction">
    <interactant intactId="EBI-3912464">
        <id>P06729</id>
    </interactant>
    <interactant intactId="EBI-346595">
        <id>Q96B97</id>
        <label>SH3KBP1</label>
    </interactant>
    <organismsDiffer>false</organismsDiffer>
    <experiments>3</experiments>
</comment>
<comment type="subcellular location">
    <subcellularLocation>
        <location evidence="7 8">Cell membrane</location>
        <topology evidence="13">Single-pass type I membrane protein</topology>
    </subcellularLocation>
</comment>
<comment type="tissue specificity">
    <text evidence="7">Expressed in natural killer cells (at protein level).</text>
</comment>
<comment type="online information" name="Wikipedia">
    <link uri="https://en.wikipedia.org/wiki/CD2"/>
    <text>CD2 entry</text>
</comment>
<reference key="1">
    <citation type="journal article" date="1988" name="Proc. Natl. Acad. Sci. U.S.A.">
        <title>Exon-intron organization and sequence comparison of human and murine T11 (CD2) genes.</title>
        <authorList>
            <person name="Diamond D.J."/>
            <person name="Clayton L.K."/>
            <person name="Sayre P.H."/>
            <person name="Reinherz E.L."/>
        </authorList>
    </citation>
    <scope>NUCLEOTIDE SEQUENCE [GENOMIC DNA]</scope>
</reference>
<reference key="2">
    <citation type="journal article" date="1987" name="Proc. Natl. Acad. Sci. U.S.A.">
        <title>Molecular cloning of the CD2 antigen, the T-cell erythrocyte receptor, by a rapid immunoselection procedure.</title>
        <authorList>
            <person name="Seed B."/>
            <person name="Aruffo A."/>
        </authorList>
    </citation>
    <scope>NUCLEOTIDE SEQUENCE [MRNA]</scope>
    <scope>VARIANT GLN-266</scope>
    <scope>SUBCELLULAR LOCATION</scope>
</reference>
<reference key="3">
    <citation type="journal article" date="1986" name="Proc. Natl. Acad. Sci. U.S.A.">
        <title>Molecular cloning of the human T-lymphocyte surface CD2 (T11) antigen.</title>
        <authorList>
            <person name="Sewell W.A."/>
            <person name="Brown M.H."/>
            <person name="Dunne J."/>
            <person name="Owen M.J."/>
            <person name="Crumpton M.J."/>
        </authorList>
    </citation>
    <scope>NUCLEOTIDE SEQUENCE [MRNA]</scope>
</reference>
<reference key="4">
    <citation type="journal article" date="1987" name="Proc. Natl. Acad. Sci. U.S.A.">
        <authorList>
            <person name="Sewell W.A."/>
            <person name="Brown M.H."/>
            <person name="Dunne J."/>
            <person name="Owen M.J."/>
            <person name="Crumpton M.J."/>
        </authorList>
    </citation>
    <scope>ERRATUM OF PUBMED:3490670</scope>
    <scope>SEQUENCE REVISION</scope>
</reference>
<reference key="5">
    <citation type="journal article" date="1987" name="Proc. Natl. Acad. Sci. U.S.A.">
        <title>Molecular cloning and expression of T11 cDNAs reveal a receptor-like structure on human T lymphocytes.</title>
        <authorList>
            <person name="Sayre P.H."/>
            <person name="Chang H.-C."/>
            <person name="Hussey R.E."/>
            <person name="Brown N.R."/>
            <person name="Richardson N.E."/>
            <person name="Spagnoli G."/>
            <person name="Clayton L.K."/>
            <person name="Reinherz E.L."/>
        </authorList>
    </citation>
    <scope>NUCLEOTIDE SEQUENCE [MRNA]</scope>
</reference>
<reference key="6">
    <citation type="journal article" date="1988" name="EMBO J.">
        <title>The structure of the human CD2 gene and its expression in transgenic mice.</title>
        <authorList>
            <person name="Lang G."/>
            <person name="Wotton D."/>
            <person name="Owen M.J."/>
            <person name="Sewell W.A."/>
            <person name="Brown M.H."/>
            <person name="Mason D.Y."/>
            <person name="Crumpton M.J."/>
            <person name="Kioussis D."/>
        </authorList>
    </citation>
    <scope>NUCLEOTIDE SEQUENCE [GENOMIC DNA]</scope>
    <scope>VARIANT GLN-266</scope>
</reference>
<reference key="7">
    <citation type="journal article" date="2006" name="Nature">
        <title>The DNA sequence and biological annotation of human chromosome 1.</title>
        <authorList>
            <person name="Gregory S.G."/>
            <person name="Barlow K.F."/>
            <person name="McLay K.E."/>
            <person name="Kaul R."/>
            <person name="Swarbreck D."/>
            <person name="Dunham A."/>
            <person name="Scott C.E."/>
            <person name="Howe K.L."/>
            <person name="Woodfine K."/>
            <person name="Spencer C.C.A."/>
            <person name="Jones M.C."/>
            <person name="Gillson C."/>
            <person name="Searle S."/>
            <person name="Zhou Y."/>
            <person name="Kokocinski F."/>
            <person name="McDonald L."/>
            <person name="Evans R."/>
            <person name="Phillips K."/>
            <person name="Atkinson A."/>
            <person name="Cooper R."/>
            <person name="Jones C."/>
            <person name="Hall R.E."/>
            <person name="Andrews T.D."/>
            <person name="Lloyd C."/>
            <person name="Ainscough R."/>
            <person name="Almeida J.P."/>
            <person name="Ambrose K.D."/>
            <person name="Anderson F."/>
            <person name="Andrew R.W."/>
            <person name="Ashwell R.I.S."/>
            <person name="Aubin K."/>
            <person name="Babbage A.K."/>
            <person name="Bagguley C.L."/>
            <person name="Bailey J."/>
            <person name="Beasley H."/>
            <person name="Bethel G."/>
            <person name="Bird C.P."/>
            <person name="Bray-Allen S."/>
            <person name="Brown J.Y."/>
            <person name="Brown A.J."/>
            <person name="Buckley D."/>
            <person name="Burton J."/>
            <person name="Bye J."/>
            <person name="Carder C."/>
            <person name="Chapman J.C."/>
            <person name="Clark S.Y."/>
            <person name="Clarke G."/>
            <person name="Clee C."/>
            <person name="Cobley V."/>
            <person name="Collier R.E."/>
            <person name="Corby N."/>
            <person name="Coville G.J."/>
            <person name="Davies J."/>
            <person name="Deadman R."/>
            <person name="Dunn M."/>
            <person name="Earthrowl M."/>
            <person name="Ellington A.G."/>
            <person name="Errington H."/>
            <person name="Frankish A."/>
            <person name="Frankland J."/>
            <person name="French L."/>
            <person name="Garner P."/>
            <person name="Garnett J."/>
            <person name="Gay L."/>
            <person name="Ghori M.R.J."/>
            <person name="Gibson R."/>
            <person name="Gilby L.M."/>
            <person name="Gillett W."/>
            <person name="Glithero R.J."/>
            <person name="Grafham D.V."/>
            <person name="Griffiths C."/>
            <person name="Griffiths-Jones S."/>
            <person name="Grocock R."/>
            <person name="Hammond S."/>
            <person name="Harrison E.S.I."/>
            <person name="Hart E."/>
            <person name="Haugen E."/>
            <person name="Heath P.D."/>
            <person name="Holmes S."/>
            <person name="Holt K."/>
            <person name="Howden P.J."/>
            <person name="Hunt A.R."/>
            <person name="Hunt S.E."/>
            <person name="Hunter G."/>
            <person name="Isherwood J."/>
            <person name="James R."/>
            <person name="Johnson C."/>
            <person name="Johnson D."/>
            <person name="Joy A."/>
            <person name="Kay M."/>
            <person name="Kershaw J.K."/>
            <person name="Kibukawa M."/>
            <person name="Kimberley A.M."/>
            <person name="King A."/>
            <person name="Knights A.J."/>
            <person name="Lad H."/>
            <person name="Laird G."/>
            <person name="Lawlor S."/>
            <person name="Leongamornlert D.A."/>
            <person name="Lloyd D.M."/>
            <person name="Loveland J."/>
            <person name="Lovell J."/>
            <person name="Lush M.J."/>
            <person name="Lyne R."/>
            <person name="Martin S."/>
            <person name="Mashreghi-Mohammadi M."/>
            <person name="Matthews L."/>
            <person name="Matthews N.S.W."/>
            <person name="McLaren S."/>
            <person name="Milne S."/>
            <person name="Mistry S."/>
            <person name="Moore M.J.F."/>
            <person name="Nickerson T."/>
            <person name="O'Dell C.N."/>
            <person name="Oliver K."/>
            <person name="Palmeiri A."/>
            <person name="Palmer S.A."/>
            <person name="Parker A."/>
            <person name="Patel D."/>
            <person name="Pearce A.V."/>
            <person name="Peck A.I."/>
            <person name="Pelan S."/>
            <person name="Phelps K."/>
            <person name="Phillimore B.J."/>
            <person name="Plumb R."/>
            <person name="Rajan J."/>
            <person name="Raymond C."/>
            <person name="Rouse G."/>
            <person name="Saenphimmachak C."/>
            <person name="Sehra H.K."/>
            <person name="Sheridan E."/>
            <person name="Shownkeen R."/>
            <person name="Sims S."/>
            <person name="Skuce C.D."/>
            <person name="Smith M."/>
            <person name="Steward C."/>
            <person name="Subramanian S."/>
            <person name="Sycamore N."/>
            <person name="Tracey A."/>
            <person name="Tromans A."/>
            <person name="Van Helmond Z."/>
            <person name="Wall M."/>
            <person name="Wallis J.M."/>
            <person name="White S."/>
            <person name="Whitehead S.L."/>
            <person name="Wilkinson J.E."/>
            <person name="Willey D.L."/>
            <person name="Williams H."/>
            <person name="Wilming L."/>
            <person name="Wray P.W."/>
            <person name="Wu Z."/>
            <person name="Coulson A."/>
            <person name="Vaudin M."/>
            <person name="Sulston J.E."/>
            <person name="Durbin R.M."/>
            <person name="Hubbard T."/>
            <person name="Wooster R."/>
            <person name="Dunham I."/>
            <person name="Carter N.P."/>
            <person name="McVean G."/>
            <person name="Ross M.T."/>
            <person name="Harrow J."/>
            <person name="Olson M.V."/>
            <person name="Beck S."/>
            <person name="Rogers J."/>
            <person name="Bentley D.R."/>
        </authorList>
    </citation>
    <scope>NUCLEOTIDE SEQUENCE [LARGE SCALE GENOMIC DNA]</scope>
</reference>
<reference key="8">
    <citation type="journal article" date="2004" name="Genome Res.">
        <title>The status, quality, and expansion of the NIH full-length cDNA project: the Mammalian Gene Collection (MGC).</title>
        <authorList>
            <consortium name="The MGC Project Team"/>
        </authorList>
    </citation>
    <scope>NUCLEOTIDE SEQUENCE [LARGE SCALE MRNA]</scope>
    <scope>VARIANT GLN-266</scope>
    <source>
        <tissue>Pancreas</tissue>
        <tissue>Spleen</tissue>
    </source>
</reference>
<reference key="9">
    <citation type="journal article" date="1987" name="Nature">
        <title>Monoclonal antibody and ligand binding sites of the T cell erythrocyte receptor (CD2).</title>
        <authorList>
            <person name="Peterson A."/>
            <person name="Seed B."/>
        </authorList>
    </citation>
    <scope>MUTAGENESIS OF LYS-67; GLN-70; TYR-110 AND ASP-111</scope>
</reference>
<reference key="10">
    <citation type="journal article" date="1992" name="Science">
        <title>Overlapping but nonidentical binding sites on CD2 for CD58 and a second ligand CD59.</title>
        <authorList>
            <person name="Hahn W.C."/>
            <person name="Menu E."/>
            <person name="Bothwell A.L.M."/>
            <person name="Sims P.J."/>
            <person name="Bierer B.E."/>
        </authorList>
    </citation>
    <scope>CD59-BINDING DATA</scope>
</reference>
<reference key="11">
    <citation type="journal article" date="1998" name="EMBO J.">
        <title>A cdc15-like adaptor protein (CD2BP1) interacts with the CD2 cytoplasmic domain and regulates CD2-triggered adhesion.</title>
        <authorList>
            <person name="Li J."/>
            <person name="Nishizawa K."/>
            <person name="An W."/>
            <person name="Hussey R.E."/>
            <person name="Lialios F.E."/>
            <person name="Salgia R."/>
            <person name="Sunder-Plassmann R."/>
            <person name="Reinherz E.L."/>
        </authorList>
    </citation>
    <scope>INTERACTION WITH PSTPIP1</scope>
</reference>
<reference key="12">
    <citation type="journal article" date="2012" name="J. Clin. Invest.">
        <title>Human immunodeficiency-causing mutation defines CD16 in spontaneous NK cell cytotoxicity.</title>
        <authorList>
            <person name="Grier J.T."/>
            <person name="Forbes L.R."/>
            <person name="Monaco-Shawver L."/>
            <person name="Oshinsky J."/>
            <person name="Atkinson T.P."/>
            <person name="Moody C."/>
            <person name="Pandey R."/>
            <person name="Campbell K.S."/>
            <person name="Orange J.S."/>
        </authorList>
    </citation>
    <scope>INTERACTION WITH FCGR3A</scope>
    <scope>SUBCELLULAR LOCATION</scope>
    <scope>TISSUE SPECIFICITY</scope>
</reference>
<reference evidence="15" key="13">
    <citation type="journal article" date="1994" name="Structure">
        <title>Crystal structure of the extracellular region of the human cell adhesion molecule CD2 at 2.5 A resolution.</title>
        <authorList>
            <person name="Bodian D.L."/>
            <person name="Jones E.Y."/>
            <person name="Harlos K."/>
            <person name="Stuart D.I."/>
            <person name="Davis S.J."/>
        </authorList>
    </citation>
    <scope>X-RAY CRYSTALLOGRAPHY (2.50 ANGSTROMS) OF 25-206</scope>
    <scope>GLYCOSYLATION AT ASN-89; ASN-141 AND ASN-150</scope>
    <scope>DISULFIDE BONDS</scope>
</reference>
<reference key="14">
    <citation type="journal article" date="1993" name="Structure">
        <title>Structure of the glycosylated adhesion domain of human T lymphocyte glycoprotein CD2.</title>
        <authorList>
            <person name="Withka J.M."/>
            <person name="Wyss D.F."/>
            <person name="Wagner G."/>
            <person name="Arulanandam A.R.N."/>
            <person name="Reinherz E.L."/>
            <person name="Recny M.A."/>
        </authorList>
    </citation>
    <scope>STRUCTURE BY NMR OF 25-129</scope>
</reference>
<reference key="15">
    <citation type="journal article" date="1995" name="Science">
        <title>Conformation and function of the N-linked glycan in the adhesion domain of human CD2.</title>
        <authorList>
            <person name="Wyss D.F."/>
            <person name="Choi J.S."/>
            <person name="Li J."/>
            <person name="Knoppers M.H."/>
            <person name="Willis K.J."/>
            <person name="Arulanandam A.R."/>
            <person name="Smolyar A."/>
            <person name="Reinherz E.L."/>
            <person name="Wagner G."/>
        </authorList>
    </citation>
    <scope>STRUCTURE BY NMR OF 25-129</scope>
    <scope>GLYCOSYLATION AT ASN-89</scope>
</reference>
<reference evidence="16" key="16">
    <citation type="journal article" date="1999" name="Cell">
        <title>Structure of a heterophilic adhesion complex between the human CD2 and CD58 (LFA-3) counterreceptors.</title>
        <authorList>
            <person name="Wang J.H."/>
            <person name="Smolyar A."/>
            <person name="Tan K."/>
            <person name="Liu J.H."/>
            <person name="Kim M."/>
            <person name="Sun Z.Y."/>
            <person name="Wagner G."/>
            <person name="Reinherz E.L."/>
        </authorList>
    </citation>
    <scope>X-RAY CRYSTALLOGRAPHY (3.20 ANGSTROMS) OF 28-129 IN COMPLEX WITH CD58</scope>
    <scope>INTERACTION WITH CD58</scope>
</reference>
<reference key="17">
    <citation type="journal article" date="2006" name="Science">
        <title>The consensus coding sequences of human breast and colorectal cancers.</title>
        <authorList>
            <person name="Sjoeblom T."/>
            <person name="Jones S."/>
            <person name="Wood L.D."/>
            <person name="Parsons D.W."/>
            <person name="Lin J."/>
            <person name="Barber T.D."/>
            <person name="Mandelker D."/>
            <person name="Leary R.J."/>
            <person name="Ptak J."/>
            <person name="Silliman N."/>
            <person name="Szabo S."/>
            <person name="Buckhaults P."/>
            <person name="Farrell C."/>
            <person name="Meeh P."/>
            <person name="Markowitz S.D."/>
            <person name="Willis J."/>
            <person name="Dawson D."/>
            <person name="Willson J.K.V."/>
            <person name="Gazdar A.F."/>
            <person name="Hartigan J."/>
            <person name="Wu L."/>
            <person name="Liu C."/>
            <person name="Parmigiani G."/>
            <person name="Park B.H."/>
            <person name="Bachman K.E."/>
            <person name="Papadopoulos N."/>
            <person name="Vogelstein B."/>
            <person name="Kinzler K.W."/>
            <person name="Velculescu V.E."/>
        </authorList>
    </citation>
    <scope>VARIANT [LARGE SCALE ANALYSIS] TYR-217</scope>
</reference>
<protein>
    <recommendedName>
        <fullName>T-cell surface antigen CD2</fullName>
    </recommendedName>
    <alternativeName>
        <fullName>Erythrocyte receptor</fullName>
    </alternativeName>
    <alternativeName>
        <fullName>LFA-2</fullName>
    </alternativeName>
    <alternativeName>
        <fullName>LFA-3 receptor</fullName>
    </alternativeName>
    <alternativeName>
        <fullName>Rosette receptor</fullName>
    </alternativeName>
    <alternativeName>
        <fullName>T-cell surface antigen T11/Leu-5</fullName>
    </alternativeName>
    <cdAntigenName>CD2</cdAntigenName>
</protein>
<feature type="signal peptide">
    <location>
        <begin position="1"/>
        <end position="24"/>
    </location>
</feature>
<feature type="chain" id="PRO_0000014600" description="T-cell surface antigen CD2">
    <location>
        <begin position="25"/>
        <end position="351"/>
    </location>
</feature>
<feature type="topological domain" description="Extracellular" evidence="3">
    <location>
        <begin position="25"/>
        <end position="209"/>
    </location>
</feature>
<feature type="transmembrane region" description="Helical" evidence="3">
    <location>
        <begin position="210"/>
        <end position="235"/>
    </location>
</feature>
<feature type="topological domain" description="Cytoplasmic" evidence="3">
    <location>
        <begin position="236"/>
        <end position="351"/>
    </location>
</feature>
<feature type="domain" description="Ig-like V-type">
    <location>
        <begin position="25"/>
        <end position="128"/>
    </location>
</feature>
<feature type="domain" description="Ig-like C2-type">
    <location>
        <begin position="129"/>
        <end position="209"/>
    </location>
</feature>
<feature type="region of interest" description="CD58 binding region 1" evidence="9">
    <location>
        <begin position="61"/>
        <end position="75"/>
    </location>
</feature>
<feature type="region of interest" description="CD58 binding region 2" evidence="9">
    <location>
        <begin position="106"/>
        <end position="120"/>
    </location>
</feature>
<feature type="region of interest" description="Disordered" evidence="4">
    <location>
        <begin position="237"/>
        <end position="351"/>
    </location>
</feature>
<feature type="compositionally biased region" description="Basic and acidic residues" evidence="4">
    <location>
        <begin position="243"/>
        <end position="262"/>
    </location>
</feature>
<feature type="compositionally biased region" description="Polar residues" evidence="4">
    <location>
        <begin position="269"/>
        <end position="280"/>
    </location>
</feature>
<feature type="compositionally biased region" description="Pro residues" evidence="4">
    <location>
        <begin position="326"/>
        <end position="338"/>
    </location>
</feature>
<feature type="glycosylation site" description="N-linked (GlcNAc...) asparagine" evidence="11 14 15">
    <location>
        <position position="89"/>
    </location>
</feature>
<feature type="glycosylation site" description="N-linked (GlcNAc...) asparagine" evidence="11 15">
    <location>
        <position position="141"/>
    </location>
</feature>
<feature type="glycosylation site" description="N-linked (GlcNAc...) asparagine" evidence="11 15">
    <location>
        <position position="150"/>
    </location>
</feature>
<feature type="disulfide bond" evidence="11">
    <location>
        <begin position="139"/>
        <end position="203"/>
    </location>
</feature>
<feature type="disulfide bond" evidence="11">
    <location>
        <begin position="146"/>
        <end position="186"/>
    </location>
</feature>
<feature type="sequence variant" id="VAR_035504" description="In a breast cancer sample; somatic mutation; dbSNP:rs1652154638." evidence="6">
    <original>C</original>
    <variation>Y</variation>
    <location>
        <position position="217"/>
    </location>
</feature>
<feature type="sequence variant" id="VAR_017104" description="In dbSNP:rs699738." evidence="5 8 10">
    <original>H</original>
    <variation>Q</variation>
    <location>
        <position position="266"/>
    </location>
</feature>
<feature type="sequence variant" id="VAR_033608" description="In dbSNP:rs35880225.">
    <original>H</original>
    <variation>N</variation>
    <location>
        <position position="339"/>
    </location>
</feature>
<feature type="mutagenesis site" description="Loss of CD58 binding." evidence="9">
    <original>K</original>
    <variation>R</variation>
    <location>
        <position position="67"/>
    </location>
</feature>
<feature type="mutagenesis site" description="Loss of CD58 binding." evidence="9">
    <original>Q</original>
    <variation>K</variation>
    <location>
        <position position="70"/>
    </location>
</feature>
<feature type="mutagenesis site" description="Loss of CD58 and CD59 binding." evidence="9">
    <original>Y</original>
    <variation>D</variation>
    <location>
        <position position="110"/>
    </location>
</feature>
<feature type="mutagenesis site" description="Loss of CD58 and CD59 binding." evidence="9">
    <original>D</original>
    <variation>H</variation>
    <location>
        <position position="111"/>
    </location>
</feature>
<feature type="sequence conflict" description="In Ref. 3." evidence="13" ref="3">
    <original>G</original>
    <variation>A</variation>
    <location>
        <position position="287"/>
    </location>
</feature>
<feature type="sequence conflict" description="In Ref. 3; AAA51946." evidence="13" ref="3">
    <original>HGAAENSLSPSSN</original>
    <variation>MGQQKTHCPLPLIKKDRNCLFQ</variation>
    <location>
        <begin position="339"/>
        <end position="351"/>
    </location>
</feature>
<feature type="strand" evidence="17">
    <location>
        <begin position="31"/>
        <end position="36"/>
    </location>
</feature>
<feature type="strand" evidence="17">
    <location>
        <begin position="41"/>
        <end position="43"/>
    </location>
</feature>
<feature type="strand" evidence="17">
    <location>
        <begin position="52"/>
        <end position="61"/>
    </location>
</feature>
<feature type="helix" evidence="17">
    <location>
        <begin position="62"/>
        <end position="64"/>
    </location>
</feature>
<feature type="strand" evidence="17">
    <location>
        <begin position="67"/>
        <end position="71"/>
    </location>
</feature>
<feature type="helix" evidence="17">
    <location>
        <begin position="73"/>
        <end position="75"/>
    </location>
</feature>
<feature type="strand" evidence="17">
    <location>
        <begin position="77"/>
        <end position="80"/>
    </location>
</feature>
<feature type="strand" evidence="17">
    <location>
        <begin position="84"/>
        <end position="86"/>
    </location>
</feature>
<feature type="turn" evidence="18">
    <location>
        <begin position="88"/>
        <end position="90"/>
    </location>
</feature>
<feature type="strand" evidence="17">
    <location>
        <begin position="92"/>
        <end position="94"/>
    </location>
</feature>
<feature type="helix" evidence="17">
    <location>
        <begin position="99"/>
        <end position="101"/>
    </location>
</feature>
<feature type="strand" evidence="17">
    <location>
        <begin position="103"/>
        <end position="111"/>
    </location>
</feature>
<feature type="strand" evidence="17">
    <location>
        <begin position="116"/>
        <end position="127"/>
    </location>
</feature>
<feature type="strand" evidence="17">
    <location>
        <begin position="134"/>
        <end position="138"/>
    </location>
</feature>
<feature type="turn" evidence="17">
    <location>
        <begin position="139"/>
        <end position="142"/>
    </location>
</feature>
<feature type="strand" evidence="17">
    <location>
        <begin position="143"/>
        <end position="147"/>
    </location>
</feature>
<feature type="strand" evidence="17">
    <location>
        <begin position="155"/>
        <end position="162"/>
    </location>
</feature>
<feature type="strand" evidence="17">
    <location>
        <begin position="164"/>
        <end position="170"/>
    </location>
</feature>
<feature type="strand" evidence="17">
    <location>
        <begin position="172"/>
        <end position="175"/>
    </location>
</feature>
<feature type="strand" evidence="17">
    <location>
        <begin position="180"/>
        <end position="189"/>
    </location>
</feature>
<feature type="strand" evidence="17">
    <location>
        <begin position="194"/>
        <end position="203"/>
    </location>
</feature>
<gene>
    <name type="primary">CD2</name>
    <name type="synonym">SRBC</name>
</gene>
<name>CD2_HUMAN</name>
<dbReference type="EMBL" id="M19806">
    <property type="protein sequence ID" value="AAA53095.1"/>
    <property type="molecule type" value="Genomic_DNA"/>
</dbReference>
<dbReference type="EMBL" id="M19798">
    <property type="protein sequence ID" value="AAA53095.1"/>
    <property type="status" value="JOINED"/>
    <property type="molecule type" value="Genomic_DNA"/>
</dbReference>
<dbReference type="EMBL" id="M19800">
    <property type="protein sequence ID" value="AAA53095.1"/>
    <property type="status" value="JOINED"/>
    <property type="molecule type" value="Genomic_DNA"/>
</dbReference>
<dbReference type="EMBL" id="M19802">
    <property type="protein sequence ID" value="AAA53095.1"/>
    <property type="status" value="JOINED"/>
    <property type="molecule type" value="Genomic_DNA"/>
</dbReference>
<dbReference type="EMBL" id="M19804">
    <property type="protein sequence ID" value="AAA53095.1"/>
    <property type="status" value="JOINED"/>
    <property type="molecule type" value="Genomic_DNA"/>
</dbReference>
<dbReference type="EMBL" id="M16445">
    <property type="protein sequence ID" value="AAA51738.1"/>
    <property type="molecule type" value="mRNA"/>
</dbReference>
<dbReference type="EMBL" id="M14362">
    <property type="protein sequence ID" value="AAA35571.1"/>
    <property type="molecule type" value="mRNA"/>
</dbReference>
<dbReference type="EMBL" id="M16336">
    <property type="protein sequence ID" value="AAA51946.1"/>
    <property type="molecule type" value="mRNA"/>
</dbReference>
<dbReference type="EMBL" id="X07871">
    <property type="protein sequence ID" value="CAA30721.1"/>
    <property type="molecule type" value="Genomic_DNA"/>
</dbReference>
<dbReference type="EMBL" id="X07872">
    <property type="protein sequence ID" value="CAA30721.1"/>
    <property type="status" value="JOINED"/>
    <property type="molecule type" value="Genomic_DNA"/>
</dbReference>
<dbReference type="EMBL" id="X07873">
    <property type="protein sequence ID" value="CAA30721.1"/>
    <property type="status" value="JOINED"/>
    <property type="molecule type" value="Genomic_DNA"/>
</dbReference>
<dbReference type="EMBL" id="X07874">
    <property type="protein sequence ID" value="CAA30721.1"/>
    <property type="status" value="JOINED"/>
    <property type="molecule type" value="Genomic_DNA"/>
</dbReference>
<dbReference type="EMBL" id="AL135798">
    <property type="status" value="NOT_ANNOTATED_CDS"/>
    <property type="molecule type" value="Genomic_DNA"/>
</dbReference>
<dbReference type="EMBL" id="BC033583">
    <property type="protein sequence ID" value="AAH33583.1"/>
    <property type="molecule type" value="mRNA"/>
</dbReference>
<dbReference type="CCDS" id="CCDS889.1"/>
<dbReference type="PIR" id="A28967">
    <property type="entry name" value="RWHUC2"/>
</dbReference>
<dbReference type="RefSeq" id="NP_001315538.1">
    <property type="nucleotide sequence ID" value="NM_001328609.1"/>
</dbReference>
<dbReference type="RefSeq" id="NP_001758.2">
    <property type="nucleotide sequence ID" value="NM_001767.5"/>
</dbReference>
<dbReference type="PDB" id="1CDB">
    <property type="method" value="NMR"/>
    <property type="chains" value="A=25-129"/>
</dbReference>
<dbReference type="PDB" id="1GYA">
    <property type="method" value="NMR"/>
    <property type="chains" value="A=25-129"/>
</dbReference>
<dbReference type="PDB" id="1HNF">
    <property type="method" value="X-ray"/>
    <property type="resolution" value="2.50 A"/>
    <property type="chains" value="A=25-206"/>
</dbReference>
<dbReference type="PDB" id="1L2Z">
    <property type="method" value="NMR"/>
    <property type="chains" value="B=294-304"/>
</dbReference>
<dbReference type="PDB" id="1QA9">
    <property type="method" value="X-ray"/>
    <property type="resolution" value="3.20 A"/>
    <property type="chains" value="A/C=28-129"/>
</dbReference>
<dbReference type="PDB" id="2J6O">
    <property type="method" value="X-ray"/>
    <property type="resolution" value="2.22 A"/>
    <property type="chains" value="C=324-333"/>
</dbReference>
<dbReference type="PDB" id="2J7I">
    <property type="method" value="X-ray"/>
    <property type="resolution" value="2.90 A"/>
    <property type="chains" value="C/D=324-333"/>
</dbReference>
<dbReference type="PDBsum" id="1CDB"/>
<dbReference type="PDBsum" id="1GYA"/>
<dbReference type="PDBsum" id="1HNF"/>
<dbReference type="PDBsum" id="1L2Z"/>
<dbReference type="PDBsum" id="1QA9"/>
<dbReference type="PDBsum" id="2J6O"/>
<dbReference type="PDBsum" id="2J7I"/>
<dbReference type="SMR" id="P06729"/>
<dbReference type="BioGRID" id="107352">
    <property type="interactions" value="19"/>
</dbReference>
<dbReference type="ELM" id="P06729"/>
<dbReference type="FunCoup" id="P06729">
    <property type="interactions" value="369"/>
</dbReference>
<dbReference type="IntAct" id="P06729">
    <property type="interactions" value="10"/>
</dbReference>
<dbReference type="MINT" id="P06729"/>
<dbReference type="STRING" id="9606.ENSP00000358490"/>
<dbReference type="BindingDB" id="P06729"/>
<dbReference type="ChEMBL" id="CHEMBL2040"/>
<dbReference type="DrugBank" id="DB00092">
    <property type="generic name" value="Alefacept"/>
</dbReference>
<dbReference type="DrugBank" id="DB06371">
    <property type="generic name" value="Siplizumab"/>
</dbReference>
<dbReference type="DrugCentral" id="P06729"/>
<dbReference type="UniLectin" id="P06729"/>
<dbReference type="GlyConnect" id="586">
    <property type="glycosylation" value="8 N-Linked glycans"/>
</dbReference>
<dbReference type="GlyCosmos" id="P06729">
    <property type="glycosylation" value="4 sites, 17 glycans"/>
</dbReference>
<dbReference type="GlyGen" id="P06729">
    <property type="glycosylation" value="9 sites, 18 N-linked glycans (2 sites), 1 O-linked glycan (1 site)"/>
</dbReference>
<dbReference type="iPTMnet" id="P06729"/>
<dbReference type="PhosphoSitePlus" id="P06729"/>
<dbReference type="BioMuta" id="CD2"/>
<dbReference type="DMDM" id="160370002"/>
<dbReference type="MassIVE" id="P06729"/>
<dbReference type="PaxDb" id="9606-ENSP00000358490"/>
<dbReference type="PeptideAtlas" id="P06729"/>
<dbReference type="ProteomicsDB" id="51913"/>
<dbReference type="ABCD" id="P06729">
    <property type="antibodies" value="4 sequenced antibodies"/>
</dbReference>
<dbReference type="Antibodypedia" id="1086">
    <property type="antibodies" value="3088 antibodies from 54 providers"/>
</dbReference>
<dbReference type="DNASU" id="914"/>
<dbReference type="Ensembl" id="ENST00000369478.4">
    <property type="protein sequence ID" value="ENSP00000358490.3"/>
    <property type="gene ID" value="ENSG00000116824.5"/>
</dbReference>
<dbReference type="GeneID" id="914"/>
<dbReference type="KEGG" id="hsa:914"/>
<dbReference type="MANE-Select" id="ENST00000369478.4">
    <property type="protein sequence ID" value="ENSP00000358490.3"/>
    <property type="RefSeq nucleotide sequence ID" value="NM_001767.5"/>
    <property type="RefSeq protein sequence ID" value="NP_001758.2"/>
</dbReference>
<dbReference type="AGR" id="HGNC:1639"/>
<dbReference type="CTD" id="914"/>
<dbReference type="DisGeNET" id="914"/>
<dbReference type="GeneCards" id="CD2"/>
<dbReference type="HGNC" id="HGNC:1639">
    <property type="gene designation" value="CD2"/>
</dbReference>
<dbReference type="HPA" id="ENSG00000116824">
    <property type="expression patterns" value="Tissue enriched (lymphoid)"/>
</dbReference>
<dbReference type="MIM" id="186990">
    <property type="type" value="gene"/>
</dbReference>
<dbReference type="neXtProt" id="NX_P06729"/>
<dbReference type="OpenTargets" id="ENSG00000116824"/>
<dbReference type="PharmGKB" id="PA26198"/>
<dbReference type="VEuPathDB" id="HostDB:ENSG00000116824"/>
<dbReference type="eggNOG" id="ENOG502S5UN">
    <property type="taxonomic scope" value="Eukaryota"/>
</dbReference>
<dbReference type="GeneTree" id="ENSGT01030000234540"/>
<dbReference type="HOGENOM" id="CLU_069390_0_0_1"/>
<dbReference type="InParanoid" id="P06729"/>
<dbReference type="OMA" id="DIPNFQM"/>
<dbReference type="OrthoDB" id="8439544at2759"/>
<dbReference type="PAN-GO" id="P06729">
    <property type="GO annotations" value="5 GO annotations based on evolutionary models"/>
</dbReference>
<dbReference type="PhylomeDB" id="P06729"/>
<dbReference type="TreeFam" id="TF335971"/>
<dbReference type="PathwayCommons" id="P06729"/>
<dbReference type="Reactome" id="R-HSA-202733">
    <property type="pathway name" value="Cell surface interactions at the vascular wall"/>
</dbReference>
<dbReference type="SignaLink" id="P06729"/>
<dbReference type="BioGRID-ORCS" id="914">
    <property type="hits" value="15 hits in 1159 CRISPR screens"/>
</dbReference>
<dbReference type="ChiTaRS" id="CD2">
    <property type="organism name" value="human"/>
</dbReference>
<dbReference type="EvolutionaryTrace" id="P06729"/>
<dbReference type="GeneWiki" id="CD2"/>
<dbReference type="GenomeRNAi" id="914"/>
<dbReference type="Pharos" id="P06729">
    <property type="development level" value="Tclin"/>
</dbReference>
<dbReference type="PRO" id="PR:P06729"/>
<dbReference type="Proteomes" id="UP000005640">
    <property type="component" value="Chromosome 1"/>
</dbReference>
<dbReference type="RNAct" id="P06729">
    <property type="molecule type" value="protein"/>
</dbReference>
<dbReference type="Bgee" id="ENSG00000116824">
    <property type="expression patterns" value="Expressed in granulocyte and 139 other cell types or tissues"/>
</dbReference>
<dbReference type="ExpressionAtlas" id="P06729">
    <property type="expression patterns" value="baseline and differential"/>
</dbReference>
<dbReference type="GO" id="GO:0009986">
    <property type="term" value="C:cell surface"/>
    <property type="evidence" value="ECO:0000314"/>
    <property type="project" value="UniProtKB"/>
</dbReference>
<dbReference type="GO" id="GO:0005911">
    <property type="term" value="C:cell-cell junction"/>
    <property type="evidence" value="ECO:0007669"/>
    <property type="project" value="Ensembl"/>
</dbReference>
<dbReference type="GO" id="GO:0009898">
    <property type="term" value="C:cytoplasmic side of plasma membrane"/>
    <property type="evidence" value="ECO:0007669"/>
    <property type="project" value="Ensembl"/>
</dbReference>
<dbReference type="GO" id="GO:0009897">
    <property type="term" value="C:external side of plasma membrane"/>
    <property type="evidence" value="ECO:0000314"/>
    <property type="project" value="MGI"/>
</dbReference>
<dbReference type="GO" id="GO:0005576">
    <property type="term" value="C:extracellular region"/>
    <property type="evidence" value="ECO:0007669"/>
    <property type="project" value="Ensembl"/>
</dbReference>
<dbReference type="GO" id="GO:0005794">
    <property type="term" value="C:Golgi apparatus"/>
    <property type="evidence" value="ECO:0000314"/>
    <property type="project" value="HPA"/>
</dbReference>
<dbReference type="GO" id="GO:0005654">
    <property type="term" value="C:nucleoplasm"/>
    <property type="evidence" value="ECO:0000314"/>
    <property type="project" value="HPA"/>
</dbReference>
<dbReference type="GO" id="GO:0005886">
    <property type="term" value="C:plasma membrane"/>
    <property type="evidence" value="ECO:0000314"/>
    <property type="project" value="UniProtKB"/>
</dbReference>
<dbReference type="GO" id="GO:0032991">
    <property type="term" value="C:protein-containing complex"/>
    <property type="evidence" value="ECO:0007669"/>
    <property type="project" value="Ensembl"/>
</dbReference>
<dbReference type="GO" id="GO:0042802">
    <property type="term" value="F:identical protein binding"/>
    <property type="evidence" value="ECO:0007669"/>
    <property type="project" value="Ensembl"/>
</dbReference>
<dbReference type="GO" id="GO:0030971">
    <property type="term" value="F:receptor tyrosine kinase binding"/>
    <property type="evidence" value="ECO:0007669"/>
    <property type="project" value="Ensembl"/>
</dbReference>
<dbReference type="GO" id="GO:0038023">
    <property type="term" value="F:signaling receptor activity"/>
    <property type="evidence" value="ECO:0000303"/>
    <property type="project" value="UniProtKB"/>
</dbReference>
<dbReference type="GO" id="GO:0005102">
    <property type="term" value="F:signaling receptor binding"/>
    <property type="evidence" value="ECO:0000353"/>
    <property type="project" value="UniProtKB"/>
</dbReference>
<dbReference type="GO" id="GO:0006915">
    <property type="term" value="P:apoptotic process"/>
    <property type="evidence" value="ECO:0000304"/>
    <property type="project" value="UniProtKB"/>
</dbReference>
<dbReference type="GO" id="GO:0007166">
    <property type="term" value="P:cell surface receptor signaling pathway"/>
    <property type="evidence" value="ECO:0000304"/>
    <property type="project" value="UniProtKB"/>
</dbReference>
<dbReference type="GO" id="GO:0098609">
    <property type="term" value="P:cell-cell adhesion"/>
    <property type="evidence" value="ECO:0000318"/>
    <property type="project" value="GO_Central"/>
</dbReference>
<dbReference type="GO" id="GO:0034113">
    <property type="term" value="P:heterotypic cell-cell adhesion"/>
    <property type="evidence" value="ECO:0000314"/>
    <property type="project" value="UniProtKB"/>
</dbReference>
<dbReference type="GO" id="GO:0006955">
    <property type="term" value="P:immune response"/>
    <property type="evidence" value="ECO:0000318"/>
    <property type="project" value="GO_Central"/>
</dbReference>
<dbReference type="GO" id="GO:0001766">
    <property type="term" value="P:membrane raft polarization"/>
    <property type="evidence" value="ECO:0000304"/>
    <property type="project" value="UniProtKB"/>
</dbReference>
<dbReference type="GO" id="GO:0030101">
    <property type="term" value="P:natural killer cell activation"/>
    <property type="evidence" value="ECO:0000314"/>
    <property type="project" value="UniProtKB"/>
</dbReference>
<dbReference type="GO" id="GO:0042267">
    <property type="term" value="P:natural killer cell mediated cytotoxicity"/>
    <property type="evidence" value="ECO:0000314"/>
    <property type="project" value="UniProtKB"/>
</dbReference>
<dbReference type="GO" id="GO:0032757">
    <property type="term" value="P:positive regulation of interleukin-8 production"/>
    <property type="evidence" value="ECO:0000315"/>
    <property type="project" value="UniProtKB"/>
</dbReference>
<dbReference type="GO" id="GO:0030887">
    <property type="term" value="P:positive regulation of myeloid dendritic cell activation"/>
    <property type="evidence" value="ECO:0000303"/>
    <property type="project" value="UniProtKB"/>
</dbReference>
<dbReference type="GO" id="GO:0032760">
    <property type="term" value="P:positive regulation of tumor necrosis factor production"/>
    <property type="evidence" value="ECO:0000314"/>
    <property type="project" value="UniProtKB"/>
</dbReference>
<dbReference type="GO" id="GO:0032729">
    <property type="term" value="P:positive regulation of type II interferon production"/>
    <property type="evidence" value="ECO:0000314"/>
    <property type="project" value="UniProtKB"/>
</dbReference>
<dbReference type="GO" id="GO:0045580">
    <property type="term" value="P:regulation of T cell differentiation"/>
    <property type="evidence" value="ECO:0000303"/>
    <property type="project" value="UniProtKB"/>
</dbReference>
<dbReference type="GO" id="GO:0042110">
    <property type="term" value="P:T cell activation"/>
    <property type="evidence" value="ECO:0000304"/>
    <property type="project" value="UniProtKB"/>
</dbReference>
<dbReference type="CDD" id="cd05775">
    <property type="entry name" value="IgV_CD2_like_N"/>
    <property type="match status" value="1"/>
</dbReference>
<dbReference type="CDD" id="cd12087">
    <property type="entry name" value="TM_EGFR-like"/>
    <property type="match status" value="1"/>
</dbReference>
<dbReference type="FunFam" id="2.60.40.10:FF:001736">
    <property type="entry name" value="T-cell surface antigen CD2"/>
    <property type="match status" value="1"/>
</dbReference>
<dbReference type="Gene3D" id="2.60.40.10">
    <property type="entry name" value="Immunoglobulins"/>
    <property type="match status" value="2"/>
</dbReference>
<dbReference type="InterPro" id="IPR015632">
    <property type="entry name" value="CD2"/>
</dbReference>
<dbReference type="InterPro" id="IPR015631">
    <property type="entry name" value="CD2/SLAM_rcpt"/>
</dbReference>
<dbReference type="InterPro" id="IPR036179">
    <property type="entry name" value="Ig-like_dom_sf"/>
</dbReference>
<dbReference type="InterPro" id="IPR013783">
    <property type="entry name" value="Ig-like_fold"/>
</dbReference>
<dbReference type="InterPro" id="IPR008424">
    <property type="entry name" value="Ig_C2-set"/>
</dbReference>
<dbReference type="InterPro" id="IPR013106">
    <property type="entry name" value="Ig_V-set"/>
</dbReference>
<dbReference type="PANTHER" id="PTHR12080">
    <property type="entry name" value="SIGNALING LYMPHOCYTIC ACTIVATION MOLECULE"/>
    <property type="match status" value="1"/>
</dbReference>
<dbReference type="PANTHER" id="PTHR12080:SF54">
    <property type="entry name" value="T-CELL SURFACE ANTIGEN CD2"/>
    <property type="match status" value="1"/>
</dbReference>
<dbReference type="Pfam" id="PF05790">
    <property type="entry name" value="C2-set"/>
    <property type="match status" value="1"/>
</dbReference>
<dbReference type="Pfam" id="PF07686">
    <property type="entry name" value="V-set"/>
    <property type="match status" value="1"/>
</dbReference>
<dbReference type="PRINTS" id="PR01870">
    <property type="entry name" value="CD2ANTIGEN"/>
</dbReference>
<dbReference type="SUPFAM" id="SSF48726">
    <property type="entry name" value="Immunoglobulin"/>
    <property type="match status" value="2"/>
</dbReference>
<proteinExistence type="evidence at protein level"/>
<organism>
    <name type="scientific">Homo sapiens</name>
    <name type="common">Human</name>
    <dbReference type="NCBI Taxonomy" id="9606"/>
    <lineage>
        <taxon>Eukaryota</taxon>
        <taxon>Metazoa</taxon>
        <taxon>Chordata</taxon>
        <taxon>Craniata</taxon>
        <taxon>Vertebrata</taxon>
        <taxon>Euteleostomi</taxon>
        <taxon>Mammalia</taxon>
        <taxon>Eutheria</taxon>
        <taxon>Euarchontoglires</taxon>
        <taxon>Primates</taxon>
        <taxon>Haplorrhini</taxon>
        <taxon>Catarrhini</taxon>
        <taxon>Hominidae</taxon>
        <taxon>Homo</taxon>
    </lineage>
</organism>
<sequence>MSFPCKFVASFLLIFNVSSKGAVSKEITNALETWGALGQDINLDIPSFQMSDDIDDIKWEKTSDKKKIAQFRKEKETFKEKDTYKLFKNGTLKIKHLKTDDQDIYKVSIYDTKGKNVLEKIFDLKIQERVSKPKISWTCINTTLTCEVMNGTDPELNLYQDGKHLKLSQRVITHKWTTSLSAKFKCTAGNKVSKESSVEPVSCPEKGLDIYLIIGICGGGSLLMVFVALLVFYITKRKKQRSRRNDEELETRAHRVATEERGRKPHQIPASTPQNPATSQHPPPPPGHRSQAPSHRPPPPGHRVQHQPQKRPPAPSGTQVHQQKGPPLPRPRVQPKPPHGAAENSLSPSSN</sequence>